<organism>
    <name type="scientific">Cyriopagopus hainanus</name>
    <name type="common">Chinese bird spider</name>
    <name type="synonym">Haplopelma hainanum</name>
    <dbReference type="NCBI Taxonomy" id="209901"/>
    <lineage>
        <taxon>Eukaryota</taxon>
        <taxon>Metazoa</taxon>
        <taxon>Ecdysozoa</taxon>
        <taxon>Arthropoda</taxon>
        <taxon>Chelicerata</taxon>
        <taxon>Arachnida</taxon>
        <taxon>Araneae</taxon>
        <taxon>Mygalomorphae</taxon>
        <taxon>Theraphosidae</taxon>
        <taxon>Haplopelma</taxon>
    </lineage>
</organism>
<accession>D2Y2G7</accession>
<feature type="signal peptide" evidence="3">
    <location>
        <begin position="1"/>
        <end position="24"/>
    </location>
</feature>
<feature type="propeptide" id="PRO_0000400625" evidence="1">
    <location>
        <begin position="25"/>
        <end position="52"/>
    </location>
</feature>
<feature type="peptide" id="PRO_0000400626" description="U3-theraphotoxin-Hhn1n">
    <location>
        <begin position="53"/>
        <end position="87"/>
    </location>
</feature>
<feature type="disulfide bond" evidence="2">
    <location>
        <begin position="54"/>
        <end position="67"/>
    </location>
</feature>
<feature type="disulfide bond" evidence="2">
    <location>
        <begin position="61"/>
        <end position="72"/>
    </location>
</feature>
<feature type="disulfide bond" evidence="2">
    <location>
        <begin position="66"/>
        <end position="79"/>
    </location>
</feature>
<comment type="function">
    <text evidence="4">Weakly inhibits Kv11.1/KCNH2/ERG1, Kv1.2/KCNA2, Kv1.3/KCNA3, and Kv2.1/KCNB1 (PubMed:29483648).</text>
</comment>
<comment type="subcellular location">
    <subcellularLocation>
        <location evidence="6">Secreted</location>
    </subcellularLocation>
</comment>
<comment type="tissue specificity">
    <text evidence="6">Expressed by the venom gland.</text>
</comment>
<comment type="domain">
    <text evidence="1">The presence of a 'disulfide through disulfide knot' structurally defines this protein as a knottin.</text>
</comment>
<comment type="similarity">
    <text evidence="5">Belongs to the neurotoxin 10 (Hwtx-1) family. 51 (Hntx-8) subfamily. Hntx-8 sub-subfamily.</text>
</comment>
<name>H8F01_CYRHA</name>
<dbReference type="EMBL" id="GU293044">
    <property type="protein sequence ID" value="ADB56860.1"/>
    <property type="molecule type" value="mRNA"/>
</dbReference>
<dbReference type="SMR" id="D2Y2G7"/>
<dbReference type="ArachnoServer" id="AS001611">
    <property type="toxin name" value="U3-theraphotoxin-Hhn1n"/>
</dbReference>
<dbReference type="GO" id="GO:0005576">
    <property type="term" value="C:extracellular region"/>
    <property type="evidence" value="ECO:0007669"/>
    <property type="project" value="UniProtKB-SubCell"/>
</dbReference>
<dbReference type="GO" id="GO:0008200">
    <property type="term" value="F:ion channel inhibitor activity"/>
    <property type="evidence" value="ECO:0007669"/>
    <property type="project" value="InterPro"/>
</dbReference>
<dbReference type="GO" id="GO:0015459">
    <property type="term" value="F:potassium channel regulator activity"/>
    <property type="evidence" value="ECO:0007669"/>
    <property type="project" value="UniProtKB-KW"/>
</dbReference>
<dbReference type="GO" id="GO:0090729">
    <property type="term" value="F:toxin activity"/>
    <property type="evidence" value="ECO:0007669"/>
    <property type="project" value="UniProtKB-KW"/>
</dbReference>
<dbReference type="InterPro" id="IPR011696">
    <property type="entry name" value="Huwentoxin-1"/>
</dbReference>
<dbReference type="InterPro" id="IPR013140">
    <property type="entry name" value="Huwentoxin_CS1"/>
</dbReference>
<dbReference type="Pfam" id="PF07740">
    <property type="entry name" value="Toxin_12"/>
    <property type="match status" value="1"/>
</dbReference>
<dbReference type="SUPFAM" id="SSF57059">
    <property type="entry name" value="omega toxin-like"/>
    <property type="match status" value="1"/>
</dbReference>
<dbReference type="PROSITE" id="PS60021">
    <property type="entry name" value="HWTX_1"/>
    <property type="match status" value="1"/>
</dbReference>
<proteinExistence type="inferred from homology"/>
<protein>
    <recommendedName>
        <fullName>U3-theraphotoxin-Hhn1n</fullName>
        <shortName>U3-TRTX-Hhn1n</shortName>
    </recommendedName>
    <alternativeName>
        <fullName>Hainantoxin-VIII-6</fullName>
        <shortName>HNTX-VIII-6</shortName>
    </alternativeName>
</protein>
<sequence length="87" mass="10154">MVNMKASMFLTFAGLVLLFVVCYASESEEKEFPKEMLSSIFAVDNDFKQEERNCAGYMRECKEKLCCSGYVCSSRWKWCVLPAPWRR</sequence>
<keyword id="KW-1015">Disulfide bond</keyword>
<keyword id="KW-0872">Ion channel impairing toxin</keyword>
<keyword id="KW-0960">Knottin</keyword>
<keyword id="KW-0632">Potassium channel impairing toxin</keyword>
<keyword id="KW-0964">Secreted</keyword>
<keyword id="KW-0732">Signal</keyword>
<keyword id="KW-0800">Toxin</keyword>
<keyword id="KW-1220">Voltage-gated potassium channel impairing toxin</keyword>
<evidence type="ECO:0000250" key="1"/>
<evidence type="ECO:0000250" key="2">
    <source>
        <dbReference type="UniProtKB" id="B3FIS6"/>
    </source>
</evidence>
<evidence type="ECO:0000255" key="3"/>
<evidence type="ECO:0000269" key="4">
    <source>
    </source>
</evidence>
<evidence type="ECO:0000305" key="5"/>
<evidence type="ECO:0000305" key="6">
    <source>
    </source>
</evidence>
<reference key="1">
    <citation type="journal article" date="2010" name="J. Proteome Res.">
        <title>Molecular diversification of peptide toxins from the tarantula Haplopelma hainanum (Ornithoctonus hainana) venom based on transcriptomic, peptidomic, and genomic analyses.</title>
        <authorList>
            <person name="Tang X."/>
            <person name="Zhang Y."/>
            <person name="Hu W."/>
            <person name="Xu D."/>
            <person name="Tao H."/>
            <person name="Yang X."/>
            <person name="Li Y."/>
            <person name="Jiang L."/>
            <person name="Liang S."/>
        </authorList>
    </citation>
    <scope>NUCLEOTIDE SEQUENCE [LARGE SCALE MRNA]</scope>
    <source>
        <tissue>Venom gland</tissue>
    </source>
</reference>
<reference key="2">
    <citation type="journal article" date="2018" name="Nat. Struct. Mol. Biol.">
        <title>Screening, large-scale production and structure-based classification of cystine-dense peptides.</title>
        <authorList>
            <person name="Correnti C.E."/>
            <person name="Gewe M.M."/>
            <person name="Mehlin C."/>
            <person name="Bandaranayake A.D."/>
            <person name="Johnsen W.A."/>
            <person name="Rupert P.B."/>
            <person name="Brusniak M.Y."/>
            <person name="Clarke M."/>
            <person name="Burke S.E."/>
            <person name="De Van Der Schueren W."/>
            <person name="Pilat K."/>
            <person name="Turnbaugh S.M."/>
            <person name="May D."/>
            <person name="Watson A."/>
            <person name="Chan M.K."/>
            <person name="Bahl C.D."/>
            <person name="Olson J.M."/>
            <person name="Strong R.K."/>
        </authorList>
    </citation>
    <scope>FUNCTION</scope>
    <scope>SYNTHESIS OF 53-87</scope>
</reference>